<sequence>MAKDDVIEIDGTVLEALPNANFKVELDNKHVILCHIAGKMRMHYIRIMPGDKVKVELTPYSLDKGRITFRYK</sequence>
<proteinExistence type="inferred from homology"/>
<feature type="chain" id="PRO_0000338794" description="Translation initiation factor IF-1">
    <location>
        <begin position="1"/>
        <end position="72"/>
    </location>
</feature>
<feature type="domain" description="S1-like" evidence="1">
    <location>
        <begin position="1"/>
        <end position="72"/>
    </location>
</feature>
<accession>A7H5U1</accession>
<gene>
    <name evidence="1" type="primary">infA</name>
    <name type="ordered locus">JJD26997_1944</name>
</gene>
<name>IF1_CAMJD</name>
<evidence type="ECO:0000255" key="1">
    <source>
        <dbReference type="HAMAP-Rule" id="MF_00075"/>
    </source>
</evidence>
<dbReference type="EMBL" id="CP000768">
    <property type="protein sequence ID" value="ABS43990.1"/>
    <property type="molecule type" value="Genomic_DNA"/>
</dbReference>
<dbReference type="SMR" id="A7H5U1"/>
<dbReference type="KEGG" id="cjd:JJD26997_1944"/>
<dbReference type="HOGENOM" id="CLU_151267_1_0_7"/>
<dbReference type="Proteomes" id="UP000002302">
    <property type="component" value="Chromosome"/>
</dbReference>
<dbReference type="GO" id="GO:0005829">
    <property type="term" value="C:cytosol"/>
    <property type="evidence" value="ECO:0007669"/>
    <property type="project" value="TreeGrafter"/>
</dbReference>
<dbReference type="GO" id="GO:0043022">
    <property type="term" value="F:ribosome binding"/>
    <property type="evidence" value="ECO:0007669"/>
    <property type="project" value="UniProtKB-UniRule"/>
</dbReference>
<dbReference type="GO" id="GO:0019843">
    <property type="term" value="F:rRNA binding"/>
    <property type="evidence" value="ECO:0007669"/>
    <property type="project" value="UniProtKB-UniRule"/>
</dbReference>
<dbReference type="GO" id="GO:0003743">
    <property type="term" value="F:translation initiation factor activity"/>
    <property type="evidence" value="ECO:0007669"/>
    <property type="project" value="UniProtKB-UniRule"/>
</dbReference>
<dbReference type="CDD" id="cd04451">
    <property type="entry name" value="S1_IF1"/>
    <property type="match status" value="1"/>
</dbReference>
<dbReference type="FunFam" id="2.40.50.140:FF:000002">
    <property type="entry name" value="Translation initiation factor IF-1"/>
    <property type="match status" value="1"/>
</dbReference>
<dbReference type="Gene3D" id="2.40.50.140">
    <property type="entry name" value="Nucleic acid-binding proteins"/>
    <property type="match status" value="1"/>
</dbReference>
<dbReference type="HAMAP" id="MF_00075">
    <property type="entry name" value="IF_1"/>
    <property type="match status" value="1"/>
</dbReference>
<dbReference type="InterPro" id="IPR012340">
    <property type="entry name" value="NA-bd_OB-fold"/>
</dbReference>
<dbReference type="InterPro" id="IPR006196">
    <property type="entry name" value="RNA-binding_domain_S1_IF1"/>
</dbReference>
<dbReference type="InterPro" id="IPR003029">
    <property type="entry name" value="S1_domain"/>
</dbReference>
<dbReference type="InterPro" id="IPR004368">
    <property type="entry name" value="TIF_IF1"/>
</dbReference>
<dbReference type="NCBIfam" id="TIGR00008">
    <property type="entry name" value="infA"/>
    <property type="match status" value="1"/>
</dbReference>
<dbReference type="PANTHER" id="PTHR33370">
    <property type="entry name" value="TRANSLATION INITIATION FACTOR IF-1, CHLOROPLASTIC"/>
    <property type="match status" value="1"/>
</dbReference>
<dbReference type="PANTHER" id="PTHR33370:SF1">
    <property type="entry name" value="TRANSLATION INITIATION FACTOR IF-1, CHLOROPLASTIC"/>
    <property type="match status" value="1"/>
</dbReference>
<dbReference type="Pfam" id="PF01176">
    <property type="entry name" value="eIF-1a"/>
    <property type="match status" value="1"/>
</dbReference>
<dbReference type="SMART" id="SM00316">
    <property type="entry name" value="S1"/>
    <property type="match status" value="1"/>
</dbReference>
<dbReference type="SUPFAM" id="SSF50249">
    <property type="entry name" value="Nucleic acid-binding proteins"/>
    <property type="match status" value="1"/>
</dbReference>
<dbReference type="PROSITE" id="PS50832">
    <property type="entry name" value="S1_IF1_TYPE"/>
    <property type="match status" value="1"/>
</dbReference>
<protein>
    <recommendedName>
        <fullName evidence="1">Translation initiation factor IF-1</fullName>
    </recommendedName>
</protein>
<organism>
    <name type="scientific">Campylobacter jejuni subsp. doylei (strain ATCC BAA-1458 / RM4099 / 269.97)</name>
    <dbReference type="NCBI Taxonomy" id="360109"/>
    <lineage>
        <taxon>Bacteria</taxon>
        <taxon>Pseudomonadati</taxon>
        <taxon>Campylobacterota</taxon>
        <taxon>Epsilonproteobacteria</taxon>
        <taxon>Campylobacterales</taxon>
        <taxon>Campylobacteraceae</taxon>
        <taxon>Campylobacter</taxon>
    </lineage>
</organism>
<reference key="1">
    <citation type="submission" date="2007-07" db="EMBL/GenBank/DDBJ databases">
        <title>Complete genome sequence of Campylobacter jejuni subsp doylei 269.97 isolated from human blood.</title>
        <authorList>
            <person name="Fouts D.E."/>
            <person name="Mongodin E.F."/>
            <person name="Puiu D."/>
            <person name="Sebastian Y."/>
            <person name="Miller W.G."/>
            <person name="Mandrell R.E."/>
            <person name="Lastovica A.J."/>
            <person name="Nelson K.E."/>
        </authorList>
    </citation>
    <scope>NUCLEOTIDE SEQUENCE [LARGE SCALE GENOMIC DNA]</scope>
    <source>
        <strain>ATCC BAA-1458 / RM4099 / 269.97</strain>
    </source>
</reference>
<comment type="function">
    <text evidence="1">One of the essential components for the initiation of protein synthesis. Stabilizes the binding of IF-2 and IF-3 on the 30S subunit to which N-formylmethionyl-tRNA(fMet) subsequently binds. Helps modulate mRNA selection, yielding the 30S pre-initiation complex (PIC). Upon addition of the 50S ribosomal subunit IF-1, IF-2 and IF-3 are released leaving the mature 70S translation initiation complex.</text>
</comment>
<comment type="subunit">
    <text evidence="1">Component of the 30S ribosomal translation pre-initiation complex which assembles on the 30S ribosome in the order IF-2 and IF-3, IF-1 and N-formylmethionyl-tRNA(fMet); mRNA recruitment can occur at any time during PIC assembly.</text>
</comment>
<comment type="subcellular location">
    <subcellularLocation>
        <location evidence="1">Cytoplasm</location>
    </subcellularLocation>
</comment>
<comment type="similarity">
    <text evidence="1">Belongs to the IF-1 family.</text>
</comment>
<keyword id="KW-0963">Cytoplasm</keyword>
<keyword id="KW-0396">Initiation factor</keyword>
<keyword id="KW-0648">Protein biosynthesis</keyword>
<keyword id="KW-0694">RNA-binding</keyword>
<keyword id="KW-0699">rRNA-binding</keyword>